<accession>A9AAT7</accession>
<name>SYE_METM6</name>
<protein>
    <recommendedName>
        <fullName evidence="1">Glutamate--tRNA ligase</fullName>
        <ecNumber evidence="1">6.1.1.17</ecNumber>
    </recommendedName>
    <alternativeName>
        <fullName evidence="1">Glutamyl-tRNA synthetase</fullName>
        <shortName evidence="1">GluRS</shortName>
    </alternativeName>
</protein>
<reference key="1">
    <citation type="submission" date="2007-10" db="EMBL/GenBank/DDBJ databases">
        <title>Complete sequence of Methanococcus maripaludis C6.</title>
        <authorList>
            <consortium name="US DOE Joint Genome Institute"/>
            <person name="Copeland A."/>
            <person name="Lucas S."/>
            <person name="Lapidus A."/>
            <person name="Barry K."/>
            <person name="Glavina del Rio T."/>
            <person name="Dalin E."/>
            <person name="Tice H."/>
            <person name="Pitluck S."/>
            <person name="Clum A."/>
            <person name="Schmutz J."/>
            <person name="Larimer F."/>
            <person name="Land M."/>
            <person name="Hauser L."/>
            <person name="Kyrpides N."/>
            <person name="Mikhailova N."/>
            <person name="Sieprawska-Lupa M."/>
            <person name="Whitman W.B."/>
            <person name="Richardson P."/>
        </authorList>
    </citation>
    <scope>NUCLEOTIDE SEQUENCE [LARGE SCALE GENOMIC DNA]</scope>
    <source>
        <strain>C6 / ATCC BAA-1332</strain>
    </source>
</reference>
<sequence length="555" mass="63941">MKDTVMAYLLENSIKFKGKPNPKAAMGKILGENPDLRSKVKEVNEVISEVLKEIETMSLEEQQAKLDELAPEGLGQKTERKRKEIELKNVKGNVAMRFAPNPSGPLHIGHARASVLNDFFTKKYNGKLVLRLEDTDAKRVLPEAYEMIQEDLNWLGVKVDEVIVQSERLEIYYEYGRKLIEMGHAYVCDCDAEEFRNLREQGIPCKCRDATPEENIVLWEKMLSGEVENVAVRLKTDIAHKNPSIRDFPIFRIERTPHPKNGTKYHVYPLMNLSVTVDDHLLGMTHVLRGKDHIVNTEKQEYIYNYFGWEIPEYIHYGILKIEGPVLSTSKMHAGILSGEYSGWDDARLGTLRALRKRGIRPEALYKLMVEIGIKQADVRFAWENLYAANKDVIDKDARRFFFVESPKKVVISGAENKKIDLRMHPDRSELGNRELLFDGEIYVSDDLEAGKMYRLMELFNIVVERIENDIIYAKYDSDDLAVAKSNRASIIHWIPVKDSIPVTVIDENAENIEGFAEKDFAVVKKDDFVQFERFGFVRVDEKEDNGYICYLTHK</sequence>
<evidence type="ECO:0000255" key="1">
    <source>
        <dbReference type="HAMAP-Rule" id="MF_02076"/>
    </source>
</evidence>
<proteinExistence type="inferred from homology"/>
<organism>
    <name type="scientific">Methanococcus maripaludis (strain C6 / ATCC BAA-1332)</name>
    <dbReference type="NCBI Taxonomy" id="444158"/>
    <lineage>
        <taxon>Archaea</taxon>
        <taxon>Methanobacteriati</taxon>
        <taxon>Methanobacteriota</taxon>
        <taxon>Methanomada group</taxon>
        <taxon>Methanococci</taxon>
        <taxon>Methanococcales</taxon>
        <taxon>Methanococcaceae</taxon>
        <taxon>Methanococcus</taxon>
    </lineage>
</organism>
<comment type="function">
    <text evidence="1">Catalyzes the attachment of glutamate to tRNA(Glu) in a two-step reaction: glutamate is first activated by ATP to form Glu-AMP and then transferred to the acceptor end of tRNA(Glu).</text>
</comment>
<comment type="catalytic activity">
    <reaction evidence="1">
        <text>tRNA(Glu) + L-glutamate + ATP = L-glutamyl-tRNA(Glu) + AMP + diphosphate</text>
        <dbReference type="Rhea" id="RHEA:23540"/>
        <dbReference type="Rhea" id="RHEA-COMP:9663"/>
        <dbReference type="Rhea" id="RHEA-COMP:9680"/>
        <dbReference type="ChEBI" id="CHEBI:29985"/>
        <dbReference type="ChEBI" id="CHEBI:30616"/>
        <dbReference type="ChEBI" id="CHEBI:33019"/>
        <dbReference type="ChEBI" id="CHEBI:78442"/>
        <dbReference type="ChEBI" id="CHEBI:78520"/>
        <dbReference type="ChEBI" id="CHEBI:456215"/>
        <dbReference type="EC" id="6.1.1.17"/>
    </reaction>
</comment>
<comment type="subcellular location">
    <subcellularLocation>
        <location evidence="1">Cytoplasm</location>
    </subcellularLocation>
</comment>
<comment type="similarity">
    <text evidence="1">Belongs to the class-I aminoacyl-tRNA synthetase family. Glutamate--tRNA ligase type 2 subfamily.</text>
</comment>
<dbReference type="EC" id="6.1.1.17" evidence="1"/>
<dbReference type="EMBL" id="CP000867">
    <property type="protein sequence ID" value="ABX02460.1"/>
    <property type="molecule type" value="Genomic_DNA"/>
</dbReference>
<dbReference type="SMR" id="A9AAT7"/>
<dbReference type="STRING" id="444158.MmarC6_1648"/>
<dbReference type="KEGG" id="mmx:MmarC6_1648"/>
<dbReference type="eggNOG" id="arCOG04302">
    <property type="taxonomic scope" value="Archaea"/>
</dbReference>
<dbReference type="HOGENOM" id="CLU_001882_1_3_2"/>
<dbReference type="OrthoDB" id="10470at2157"/>
<dbReference type="PhylomeDB" id="A9AAT7"/>
<dbReference type="GO" id="GO:0005829">
    <property type="term" value="C:cytosol"/>
    <property type="evidence" value="ECO:0007669"/>
    <property type="project" value="TreeGrafter"/>
</dbReference>
<dbReference type="GO" id="GO:0032991">
    <property type="term" value="C:protein-containing complex"/>
    <property type="evidence" value="ECO:0007669"/>
    <property type="project" value="UniProtKB-ARBA"/>
</dbReference>
<dbReference type="GO" id="GO:0005524">
    <property type="term" value="F:ATP binding"/>
    <property type="evidence" value="ECO:0007669"/>
    <property type="project" value="UniProtKB-UniRule"/>
</dbReference>
<dbReference type="GO" id="GO:0004818">
    <property type="term" value="F:glutamate-tRNA ligase activity"/>
    <property type="evidence" value="ECO:0007669"/>
    <property type="project" value="UniProtKB-UniRule"/>
</dbReference>
<dbReference type="GO" id="GO:0043604">
    <property type="term" value="P:amide biosynthetic process"/>
    <property type="evidence" value="ECO:0007669"/>
    <property type="project" value="TreeGrafter"/>
</dbReference>
<dbReference type="GO" id="GO:0006424">
    <property type="term" value="P:glutamyl-tRNA aminoacylation"/>
    <property type="evidence" value="ECO:0007669"/>
    <property type="project" value="UniProtKB-UniRule"/>
</dbReference>
<dbReference type="CDD" id="cd09287">
    <property type="entry name" value="GluRS_non_core"/>
    <property type="match status" value="1"/>
</dbReference>
<dbReference type="Gene3D" id="2.40.240.100">
    <property type="match status" value="1"/>
</dbReference>
<dbReference type="Gene3D" id="3.40.50.620">
    <property type="entry name" value="HUPs"/>
    <property type="match status" value="1"/>
</dbReference>
<dbReference type="Gene3D" id="2.40.240.10">
    <property type="entry name" value="Ribosomal Protein L25, Chain P"/>
    <property type="match status" value="1"/>
</dbReference>
<dbReference type="HAMAP" id="MF_02076">
    <property type="entry name" value="Glu_tRNA_synth_type2"/>
    <property type="match status" value="1"/>
</dbReference>
<dbReference type="InterPro" id="IPR001412">
    <property type="entry name" value="aa-tRNA-synth_I_CS"/>
</dbReference>
<dbReference type="InterPro" id="IPR050132">
    <property type="entry name" value="Gln/Glu-tRNA_Ligase"/>
</dbReference>
<dbReference type="InterPro" id="IPR004526">
    <property type="entry name" value="Glu-tRNA-synth_arc/euk"/>
</dbReference>
<dbReference type="InterPro" id="IPR000924">
    <property type="entry name" value="Glu/Gln-tRNA-synth"/>
</dbReference>
<dbReference type="InterPro" id="IPR020058">
    <property type="entry name" value="Glu/Gln-tRNA-synth_Ib_cat-dom"/>
</dbReference>
<dbReference type="InterPro" id="IPR020059">
    <property type="entry name" value="Glu/Gln-tRNA-synth_Ib_codon-bd"/>
</dbReference>
<dbReference type="InterPro" id="IPR020056">
    <property type="entry name" value="Rbsml_bL25/Gln-tRNA_synth_N"/>
</dbReference>
<dbReference type="InterPro" id="IPR011035">
    <property type="entry name" value="Ribosomal_bL25/Gln-tRNA_synth"/>
</dbReference>
<dbReference type="InterPro" id="IPR014729">
    <property type="entry name" value="Rossmann-like_a/b/a_fold"/>
</dbReference>
<dbReference type="InterPro" id="IPR049437">
    <property type="entry name" value="tRNA-synt_1c_C2"/>
</dbReference>
<dbReference type="NCBIfam" id="TIGR00463">
    <property type="entry name" value="gltX_arch"/>
    <property type="match status" value="1"/>
</dbReference>
<dbReference type="NCBIfam" id="NF003169">
    <property type="entry name" value="PRK04156.1"/>
    <property type="match status" value="1"/>
</dbReference>
<dbReference type="PANTHER" id="PTHR43097:SF5">
    <property type="entry name" value="GLUTAMATE--TRNA LIGASE"/>
    <property type="match status" value="1"/>
</dbReference>
<dbReference type="PANTHER" id="PTHR43097">
    <property type="entry name" value="GLUTAMINE-TRNA LIGASE"/>
    <property type="match status" value="1"/>
</dbReference>
<dbReference type="Pfam" id="PF00749">
    <property type="entry name" value="tRNA-synt_1c"/>
    <property type="match status" value="1"/>
</dbReference>
<dbReference type="Pfam" id="PF03950">
    <property type="entry name" value="tRNA-synt_1c_C"/>
    <property type="match status" value="1"/>
</dbReference>
<dbReference type="Pfam" id="PF20974">
    <property type="entry name" value="tRNA-synt_1c_C2"/>
    <property type="match status" value="1"/>
</dbReference>
<dbReference type="PRINTS" id="PR00987">
    <property type="entry name" value="TRNASYNTHGLU"/>
</dbReference>
<dbReference type="SUPFAM" id="SSF52374">
    <property type="entry name" value="Nucleotidylyl transferase"/>
    <property type="match status" value="1"/>
</dbReference>
<dbReference type="SUPFAM" id="SSF50715">
    <property type="entry name" value="Ribosomal protein L25-like"/>
    <property type="match status" value="1"/>
</dbReference>
<dbReference type="PROSITE" id="PS00178">
    <property type="entry name" value="AA_TRNA_LIGASE_I"/>
    <property type="match status" value="1"/>
</dbReference>
<gene>
    <name evidence="1" type="primary">gltX</name>
    <name type="ordered locus">MmarC6_1648</name>
</gene>
<keyword id="KW-0030">Aminoacyl-tRNA synthetase</keyword>
<keyword id="KW-0067">ATP-binding</keyword>
<keyword id="KW-0963">Cytoplasm</keyword>
<keyword id="KW-0436">Ligase</keyword>
<keyword id="KW-0547">Nucleotide-binding</keyword>
<keyword id="KW-0648">Protein biosynthesis</keyword>
<feature type="chain" id="PRO_1000090088" description="Glutamate--tRNA ligase">
    <location>
        <begin position="1"/>
        <end position="555"/>
    </location>
</feature>
<feature type="short sequence motif" description="'HIGH' region" evidence="1">
    <location>
        <begin position="100"/>
        <end position="110"/>
    </location>
</feature>